<gene>
    <name evidence="1" type="primary">uvrB</name>
    <name type="ordered locus">Mbur_2303</name>
</gene>
<accession>Q12TR7</accession>
<dbReference type="EMBL" id="CP000300">
    <property type="protein sequence ID" value="ABE53159.1"/>
    <property type="molecule type" value="Genomic_DNA"/>
</dbReference>
<dbReference type="RefSeq" id="WP_011500294.1">
    <property type="nucleotide sequence ID" value="NC_007955.1"/>
</dbReference>
<dbReference type="SMR" id="Q12TR7"/>
<dbReference type="STRING" id="259564.Mbur_2303"/>
<dbReference type="GeneID" id="3998882"/>
<dbReference type="KEGG" id="mbu:Mbur_2303"/>
<dbReference type="HOGENOM" id="CLU_009621_2_1_2"/>
<dbReference type="OrthoDB" id="8371at2157"/>
<dbReference type="Proteomes" id="UP000001979">
    <property type="component" value="Chromosome"/>
</dbReference>
<dbReference type="GO" id="GO:0005737">
    <property type="term" value="C:cytoplasm"/>
    <property type="evidence" value="ECO:0007669"/>
    <property type="project" value="UniProtKB-SubCell"/>
</dbReference>
<dbReference type="GO" id="GO:0009380">
    <property type="term" value="C:excinuclease repair complex"/>
    <property type="evidence" value="ECO:0007669"/>
    <property type="project" value="InterPro"/>
</dbReference>
<dbReference type="GO" id="GO:0005524">
    <property type="term" value="F:ATP binding"/>
    <property type="evidence" value="ECO:0007669"/>
    <property type="project" value="UniProtKB-UniRule"/>
</dbReference>
<dbReference type="GO" id="GO:0016887">
    <property type="term" value="F:ATP hydrolysis activity"/>
    <property type="evidence" value="ECO:0007669"/>
    <property type="project" value="InterPro"/>
</dbReference>
<dbReference type="GO" id="GO:0003677">
    <property type="term" value="F:DNA binding"/>
    <property type="evidence" value="ECO:0007669"/>
    <property type="project" value="UniProtKB-UniRule"/>
</dbReference>
<dbReference type="GO" id="GO:0009381">
    <property type="term" value="F:excinuclease ABC activity"/>
    <property type="evidence" value="ECO:0007669"/>
    <property type="project" value="UniProtKB-UniRule"/>
</dbReference>
<dbReference type="GO" id="GO:0004386">
    <property type="term" value="F:helicase activity"/>
    <property type="evidence" value="ECO:0007669"/>
    <property type="project" value="UniProtKB-KW"/>
</dbReference>
<dbReference type="GO" id="GO:0006289">
    <property type="term" value="P:nucleotide-excision repair"/>
    <property type="evidence" value="ECO:0007669"/>
    <property type="project" value="UniProtKB-UniRule"/>
</dbReference>
<dbReference type="GO" id="GO:0009432">
    <property type="term" value="P:SOS response"/>
    <property type="evidence" value="ECO:0007669"/>
    <property type="project" value="UniProtKB-UniRule"/>
</dbReference>
<dbReference type="CDD" id="cd17916">
    <property type="entry name" value="DEXHc_UvrB"/>
    <property type="match status" value="1"/>
</dbReference>
<dbReference type="CDD" id="cd18790">
    <property type="entry name" value="SF2_C_UvrB"/>
    <property type="match status" value="1"/>
</dbReference>
<dbReference type="Gene3D" id="3.40.50.300">
    <property type="entry name" value="P-loop containing nucleotide triphosphate hydrolases"/>
    <property type="match status" value="3"/>
</dbReference>
<dbReference type="Gene3D" id="4.10.860.10">
    <property type="entry name" value="UVR domain"/>
    <property type="match status" value="1"/>
</dbReference>
<dbReference type="HAMAP" id="MF_00204">
    <property type="entry name" value="UvrB"/>
    <property type="match status" value="1"/>
</dbReference>
<dbReference type="InterPro" id="IPR006935">
    <property type="entry name" value="Helicase/UvrB_N"/>
</dbReference>
<dbReference type="InterPro" id="IPR014001">
    <property type="entry name" value="Helicase_ATP-bd"/>
</dbReference>
<dbReference type="InterPro" id="IPR001650">
    <property type="entry name" value="Helicase_C-like"/>
</dbReference>
<dbReference type="InterPro" id="IPR027417">
    <property type="entry name" value="P-loop_NTPase"/>
</dbReference>
<dbReference type="InterPro" id="IPR001943">
    <property type="entry name" value="UVR_dom"/>
</dbReference>
<dbReference type="InterPro" id="IPR036876">
    <property type="entry name" value="UVR_dom_sf"/>
</dbReference>
<dbReference type="InterPro" id="IPR004807">
    <property type="entry name" value="UvrB"/>
</dbReference>
<dbReference type="InterPro" id="IPR041471">
    <property type="entry name" value="UvrB_inter"/>
</dbReference>
<dbReference type="InterPro" id="IPR024759">
    <property type="entry name" value="UvrB_YAD/RRR_dom"/>
</dbReference>
<dbReference type="NCBIfam" id="NF003673">
    <property type="entry name" value="PRK05298.1"/>
    <property type="match status" value="1"/>
</dbReference>
<dbReference type="NCBIfam" id="TIGR00631">
    <property type="entry name" value="uvrb"/>
    <property type="match status" value="1"/>
</dbReference>
<dbReference type="PANTHER" id="PTHR24029">
    <property type="entry name" value="UVRABC SYSTEM PROTEIN B"/>
    <property type="match status" value="1"/>
</dbReference>
<dbReference type="PANTHER" id="PTHR24029:SF0">
    <property type="entry name" value="UVRABC SYSTEM PROTEIN B"/>
    <property type="match status" value="1"/>
</dbReference>
<dbReference type="Pfam" id="PF00271">
    <property type="entry name" value="Helicase_C"/>
    <property type="match status" value="1"/>
</dbReference>
<dbReference type="Pfam" id="PF04851">
    <property type="entry name" value="ResIII"/>
    <property type="match status" value="1"/>
</dbReference>
<dbReference type="Pfam" id="PF02151">
    <property type="entry name" value="UVR"/>
    <property type="match status" value="1"/>
</dbReference>
<dbReference type="Pfam" id="PF12344">
    <property type="entry name" value="UvrB"/>
    <property type="match status" value="1"/>
</dbReference>
<dbReference type="Pfam" id="PF17757">
    <property type="entry name" value="UvrB_inter"/>
    <property type="match status" value="1"/>
</dbReference>
<dbReference type="SMART" id="SM00487">
    <property type="entry name" value="DEXDc"/>
    <property type="match status" value="1"/>
</dbReference>
<dbReference type="SMART" id="SM00490">
    <property type="entry name" value="HELICc"/>
    <property type="match status" value="1"/>
</dbReference>
<dbReference type="SUPFAM" id="SSF46600">
    <property type="entry name" value="C-terminal UvrC-binding domain of UvrB"/>
    <property type="match status" value="1"/>
</dbReference>
<dbReference type="SUPFAM" id="SSF52540">
    <property type="entry name" value="P-loop containing nucleoside triphosphate hydrolases"/>
    <property type="match status" value="2"/>
</dbReference>
<dbReference type="PROSITE" id="PS51192">
    <property type="entry name" value="HELICASE_ATP_BIND_1"/>
    <property type="match status" value="1"/>
</dbReference>
<dbReference type="PROSITE" id="PS51194">
    <property type="entry name" value="HELICASE_CTER"/>
    <property type="match status" value="1"/>
</dbReference>
<dbReference type="PROSITE" id="PS50151">
    <property type="entry name" value="UVR"/>
    <property type="match status" value="1"/>
</dbReference>
<evidence type="ECO:0000255" key="1">
    <source>
        <dbReference type="HAMAP-Rule" id="MF_00204"/>
    </source>
</evidence>
<keyword id="KW-0067">ATP-binding</keyword>
<keyword id="KW-0963">Cytoplasm</keyword>
<keyword id="KW-0227">DNA damage</keyword>
<keyword id="KW-0228">DNA excision</keyword>
<keyword id="KW-0234">DNA repair</keyword>
<keyword id="KW-0267">Excision nuclease</keyword>
<keyword id="KW-0347">Helicase</keyword>
<keyword id="KW-0378">Hydrolase</keyword>
<keyword id="KW-0547">Nucleotide-binding</keyword>
<keyword id="KW-0742">SOS response</keyword>
<sequence length="660" mass="74685">MSGFELVSDYEPKGDQPEAIRKLSEGLNKGLKHQVLLGVTGSGKTFTVANVIQNVQKPTLVIAHNKTLAAQLFSEFREFFPNNAVEYFVSYYDYYQPEAYLPTTDTYIEKDSSVNEEIDRLRLSATKSLIERKDVIVVSSVSSIYNIGSPDEWRRMSVILRTGDEVGRSDLFAALINIHYERNDIESAKGSFRSKGDTIEVFPAQDNHGVRIELFGDEIDRISSFDPVTGKTIDEVKEDNSIVIYPAKHFVMPQEEMVKALGSIEKELEGQVAKLVSENRILESQRLTQRAKFDLEMIRELGYCSGIENYSRHFDGRKPGDPPSSLLEFFPDDFLLVIDESHVTIPQIRGMHNGDRARKEALINYGFRLPSAYDNRPLTYNEFHHKINQAIYVSATPADYELGISSAVVEQIIRPTGLVDPVVFIRPVENQIDDLIGEVNKVTEKGYRTLVTTLTKRMAEDLTEYLLEMGIRVRYMHSDIDTLERAEIIRDLRKGVFDVLVGINLLREGLDIPEVAFVAILDADKEGFLRSERSLIQTMGRASRNADGYVILYAGKVTGSIEAALRETNRRRQIQLAYNEKHGIVPQTIHKALQRELVETEYGEVVSEVLGVAEDLSDIEIADMVIELEAEMHLAAKNLEFERAAALRDNIKELRSTYSL</sequence>
<protein>
    <recommendedName>
        <fullName evidence="1">UvrABC system protein B</fullName>
        <shortName evidence="1">Protein UvrB</shortName>
    </recommendedName>
    <alternativeName>
        <fullName evidence="1">Excinuclease ABC subunit B</fullName>
    </alternativeName>
</protein>
<comment type="function">
    <text evidence="1">The UvrABC repair system catalyzes the recognition and processing of DNA lesions. A damage recognition complex composed of 2 UvrA and 2 UvrB subunits scans DNA for abnormalities. Upon binding of the UvrA(2)B(2) complex to a putative damaged site, the DNA wraps around one UvrB monomer. DNA wrap is dependent on ATP binding by UvrB and probably causes local melting of the DNA helix, facilitating insertion of UvrB beta-hairpin between the DNA strands. Then UvrB probes one DNA strand for the presence of a lesion. If a lesion is found the UvrA subunits dissociate and the UvrB-DNA preincision complex is formed. This complex is subsequently bound by UvrC and the second UvrB is released. If no lesion is found, the DNA wraps around the other UvrB subunit that will check the other stand for damage.</text>
</comment>
<comment type="subunit">
    <text evidence="1">Forms a heterotetramer with UvrA during the search for lesions. Interacts with UvrC in an incision complex.</text>
</comment>
<comment type="subcellular location">
    <subcellularLocation>
        <location evidence="1">Cytoplasm</location>
    </subcellularLocation>
</comment>
<comment type="domain">
    <text evidence="1">The beta-hairpin motif is involved in DNA binding.</text>
</comment>
<comment type="similarity">
    <text evidence="1">Belongs to the UvrB family.</text>
</comment>
<feature type="chain" id="PRO_1000204137" description="UvrABC system protein B">
    <location>
        <begin position="1"/>
        <end position="660"/>
    </location>
</feature>
<feature type="domain" description="Helicase ATP-binding" evidence="1">
    <location>
        <begin position="25"/>
        <end position="183"/>
    </location>
</feature>
<feature type="domain" description="Helicase C-terminal" evidence="1">
    <location>
        <begin position="431"/>
        <end position="593"/>
    </location>
</feature>
<feature type="domain" description="UVR" evidence="1">
    <location>
        <begin position="622"/>
        <end position="657"/>
    </location>
</feature>
<feature type="short sequence motif" description="Beta-hairpin">
    <location>
        <begin position="91"/>
        <end position="114"/>
    </location>
</feature>
<feature type="binding site" evidence="1">
    <location>
        <begin position="38"/>
        <end position="45"/>
    </location>
    <ligand>
        <name>ATP</name>
        <dbReference type="ChEBI" id="CHEBI:30616"/>
    </ligand>
</feature>
<reference key="1">
    <citation type="journal article" date="2009" name="ISME J.">
        <title>The genome sequence of the psychrophilic archaeon, Methanococcoides burtonii: the role of genome evolution in cold adaptation.</title>
        <authorList>
            <person name="Allen M.A."/>
            <person name="Lauro F.M."/>
            <person name="Williams T.J."/>
            <person name="Burg D."/>
            <person name="Siddiqui K.S."/>
            <person name="De Francisci D."/>
            <person name="Chong K.W."/>
            <person name="Pilak O."/>
            <person name="Chew H.H."/>
            <person name="De Maere M.Z."/>
            <person name="Ting L."/>
            <person name="Katrib M."/>
            <person name="Ng C."/>
            <person name="Sowers K.R."/>
            <person name="Galperin M.Y."/>
            <person name="Anderson I.J."/>
            <person name="Ivanova N."/>
            <person name="Dalin E."/>
            <person name="Martinez M."/>
            <person name="Lapidus A."/>
            <person name="Hauser L."/>
            <person name="Land M."/>
            <person name="Thomas T."/>
            <person name="Cavicchioli R."/>
        </authorList>
    </citation>
    <scope>NUCLEOTIDE SEQUENCE [LARGE SCALE GENOMIC DNA]</scope>
    <source>
        <strain>DSM 6242 / NBRC 107633 / OCM 468 / ACE-M</strain>
    </source>
</reference>
<organism>
    <name type="scientific">Methanococcoides burtonii (strain DSM 6242 / NBRC 107633 / OCM 468 / ACE-M)</name>
    <dbReference type="NCBI Taxonomy" id="259564"/>
    <lineage>
        <taxon>Archaea</taxon>
        <taxon>Methanobacteriati</taxon>
        <taxon>Methanobacteriota</taxon>
        <taxon>Stenosarchaea group</taxon>
        <taxon>Methanomicrobia</taxon>
        <taxon>Methanosarcinales</taxon>
        <taxon>Methanosarcinaceae</taxon>
        <taxon>Methanococcoides</taxon>
    </lineage>
</organism>
<name>UVRB_METBU</name>
<proteinExistence type="inferred from homology"/>